<proteinExistence type="inferred from homology"/>
<accession>Q1L6A3</accession>
<keyword id="KW-0030">Aminoacyl-tRNA synthetase</keyword>
<keyword id="KW-0067">ATP-binding</keyword>
<keyword id="KW-0963">Cytoplasm</keyword>
<keyword id="KW-0436">Ligase</keyword>
<keyword id="KW-0547">Nucleotide-binding</keyword>
<keyword id="KW-0648">Protein biosynthesis</keyword>
<comment type="function">
    <text evidence="1">Catalyzes the attachment of pyrrolysine to tRNA(Pyl). Pyrrolysine is a lysine derivative encoded by the termination codon UAG.</text>
</comment>
<comment type="catalytic activity">
    <reaction evidence="1">
        <text>tRNA(Pyl) + L-pyrrolysine + ATP = L-pyrrolysyl-tRNA(Pyl) + AMP + diphosphate</text>
        <dbReference type="Rhea" id="RHEA:19277"/>
        <dbReference type="Rhea" id="RHEA-COMP:9720"/>
        <dbReference type="Rhea" id="RHEA-COMP:9721"/>
        <dbReference type="ChEBI" id="CHEBI:30616"/>
        <dbReference type="ChEBI" id="CHEBI:33019"/>
        <dbReference type="ChEBI" id="CHEBI:58499"/>
        <dbReference type="ChEBI" id="CHEBI:78442"/>
        <dbReference type="ChEBI" id="CHEBI:78556"/>
        <dbReference type="ChEBI" id="CHEBI:456215"/>
        <dbReference type="EC" id="6.1.1.26"/>
    </reaction>
</comment>
<comment type="subcellular location">
    <subcellularLocation>
        <location evidence="1">Cytoplasm</location>
    </subcellularLocation>
</comment>
<comment type="similarity">
    <text evidence="1">Belongs to the class-II aminoacyl-tRNA synthetase family.</text>
</comment>
<name>PYLS_METTE</name>
<evidence type="ECO:0000255" key="1">
    <source>
        <dbReference type="HAMAP-Rule" id="MF_01573"/>
    </source>
</evidence>
<evidence type="ECO:0000256" key="2">
    <source>
        <dbReference type="SAM" id="MobiDB-lite"/>
    </source>
</evidence>
<protein>
    <recommendedName>
        <fullName evidence="1">Pyrrolysine--tRNA ligase</fullName>
        <ecNumber evidence="1">6.1.1.26</ecNumber>
    </recommendedName>
    <alternativeName>
        <fullName>Pyrrolysine--tRNA(Pyl) ligase</fullName>
    </alternativeName>
    <alternativeName>
        <fullName evidence="1">Pyrrolysyl-tRNA synthetase</fullName>
        <shortName evidence="1">PylRS</shortName>
    </alternativeName>
</protein>
<gene>
    <name evidence="1" type="primary">pylS</name>
</gene>
<reference key="1">
    <citation type="submission" date="2006-05" db="EMBL/GenBank/DDBJ databases">
        <title>The substrate specificity of pyrrolysyl-tRNA synthetase.</title>
        <authorList>
            <person name="Polycarpo C."/>
            <person name="Ambrogelly A."/>
            <person name="Herring S."/>
            <person name="Soell D.G."/>
        </authorList>
    </citation>
    <scope>NUCLEOTIDE SEQUENCE [GENOMIC DNA]</scope>
</reference>
<organism>
    <name type="scientific">Methanosarcina thermophila</name>
    <dbReference type="NCBI Taxonomy" id="2210"/>
    <lineage>
        <taxon>Archaea</taxon>
        <taxon>Methanobacteriati</taxon>
        <taxon>Methanobacteriota</taxon>
        <taxon>Stenosarchaea group</taxon>
        <taxon>Methanomicrobia</taxon>
        <taxon>Methanosarcinales</taxon>
        <taxon>Methanosarcinaceae</taxon>
        <taxon>Methanosarcina</taxon>
    </lineage>
</organism>
<feature type="chain" id="PRO_0000260454" description="Pyrrolysine--tRNA ligase">
    <location>
        <begin position="1"/>
        <end position="478"/>
    </location>
</feature>
<feature type="region of interest" description="Disordered" evidence="2">
    <location>
        <begin position="106"/>
        <end position="188"/>
    </location>
</feature>
<feature type="compositionally biased region" description="Polar residues" evidence="2">
    <location>
        <begin position="122"/>
        <end position="132"/>
    </location>
</feature>
<feature type="compositionally biased region" description="Low complexity" evidence="2">
    <location>
        <begin position="133"/>
        <end position="188"/>
    </location>
</feature>
<sequence>MDKKPLNTLISATGLWMSRTGKLHKIRHHEVSKRKIYIEMECGERLVVNNSRSCRAARALRHHKYRKICKHCRVSDEDLNKFLTRTNEDKSNAKVTVVSAPKIRKVMPKSVARTPKPLENTAPVQTLPSESQPAPTTPISASTTAPASTSTTAPAPASTTAPAPASTTAPASASTTISTSAMPASTSAQGTTKFNYISGGFPRPIPVQASAPALTKSQIDRLQGLLSPKDEISLDSGTPFRKLESELLSRRRKDLKQIYAEEREHYLGKLEREITKFFVDRGFLEIKSPILIPMEYIERMGIDNDKELSKQIFRVDNNFCLRPMLAPNLYNYLRKLNRALPDPIKIFEIGPCYRKESDGKEHLEEFTMLNFCQMGSGCTRENLEAIIKDFLDYLGIDFEIVGDSCMVYGDTLDVMHGDLELSSAVVGPVPMDRDWGINKPWIGAGFGLERLLKVMHNFKNIKRASRSESYYNGISTNL</sequence>
<dbReference type="EC" id="6.1.1.26" evidence="1"/>
<dbReference type="EMBL" id="DQ017250">
    <property type="protein sequence ID" value="AAY81923.1"/>
    <property type="molecule type" value="Genomic_DNA"/>
</dbReference>
<dbReference type="SMR" id="Q1L6A3"/>
<dbReference type="BRENDA" id="6.1.1.26">
    <property type="organism ID" value="3281"/>
</dbReference>
<dbReference type="GO" id="GO:0005737">
    <property type="term" value="C:cytoplasm"/>
    <property type="evidence" value="ECO:0007669"/>
    <property type="project" value="UniProtKB-SubCell"/>
</dbReference>
<dbReference type="GO" id="GO:0005524">
    <property type="term" value="F:ATP binding"/>
    <property type="evidence" value="ECO:0007669"/>
    <property type="project" value="UniProtKB-UniRule"/>
</dbReference>
<dbReference type="GO" id="GO:0043767">
    <property type="term" value="F:pyrrolysyl-tRNA synthetase activity"/>
    <property type="evidence" value="ECO:0007669"/>
    <property type="project" value="UniProtKB-EC"/>
</dbReference>
<dbReference type="GO" id="GO:0000049">
    <property type="term" value="F:tRNA binding"/>
    <property type="evidence" value="ECO:0007669"/>
    <property type="project" value="InterPro"/>
</dbReference>
<dbReference type="GO" id="GO:0006418">
    <property type="term" value="P:tRNA aminoacylation for protein translation"/>
    <property type="evidence" value="ECO:0007669"/>
    <property type="project" value="UniProtKB-UniRule"/>
</dbReference>
<dbReference type="Gene3D" id="3.30.930.10">
    <property type="entry name" value="Bira Bifunctional Protein, Domain 2"/>
    <property type="match status" value="1"/>
</dbReference>
<dbReference type="Gene3D" id="1.10.287.540">
    <property type="entry name" value="Helix hairpin bin"/>
    <property type="match status" value="1"/>
</dbReference>
<dbReference type="HAMAP" id="MF_01573">
    <property type="entry name" value="Pyl_tRNA_synth"/>
    <property type="match status" value="1"/>
</dbReference>
<dbReference type="InterPro" id="IPR006195">
    <property type="entry name" value="aa-tRNA-synth_II"/>
</dbReference>
<dbReference type="InterPro" id="IPR045864">
    <property type="entry name" value="aa-tRNA-synth_II/BPL/LPL"/>
</dbReference>
<dbReference type="InterPro" id="IPR002319">
    <property type="entry name" value="Phenylalanyl-tRNA_Synthase"/>
</dbReference>
<dbReference type="InterPro" id="IPR012739">
    <property type="entry name" value="Pyrrolysyl-tRNA_ligase"/>
</dbReference>
<dbReference type="InterPro" id="IPR023877">
    <property type="entry name" value="Pyrrolysyl-tRNA_ligase_C"/>
</dbReference>
<dbReference type="InterPro" id="IPR023878">
    <property type="entry name" value="Pyrrolysyl-tRNA_ligase_N"/>
</dbReference>
<dbReference type="NCBIfam" id="NF007083">
    <property type="entry name" value="PRK09537.1"/>
    <property type="match status" value="1"/>
</dbReference>
<dbReference type="NCBIfam" id="TIGR02367">
    <property type="entry name" value="PylS_Cterm"/>
    <property type="match status" value="1"/>
</dbReference>
<dbReference type="NCBIfam" id="TIGR03912">
    <property type="entry name" value="PylS_Nterm"/>
    <property type="match status" value="1"/>
</dbReference>
<dbReference type="Pfam" id="PF01409">
    <property type="entry name" value="tRNA-synt_2d"/>
    <property type="match status" value="1"/>
</dbReference>
<dbReference type="SUPFAM" id="SSF55681">
    <property type="entry name" value="Class II aaRS and biotin synthetases"/>
    <property type="match status" value="1"/>
</dbReference>
<dbReference type="PROSITE" id="PS50862">
    <property type="entry name" value="AA_TRNA_LIGASE_II"/>
    <property type="match status" value="1"/>
</dbReference>